<comment type="function">
    <text evidence="2">Catalyzes the acetylation of beta-lysine to N6-acetyl-beta-lysine, a compatible solute produced by methanogenic archaea that helps cells to cope with salt stress.</text>
</comment>
<comment type="catalytic activity">
    <reaction evidence="2">
        <text>(3S)-3,6-diaminohexanoate + acetyl-CoA = (3S)-6-acetamido-3-aminohexanoate + CoA + H(+)</text>
        <dbReference type="Rhea" id="RHEA:33019"/>
        <dbReference type="ChEBI" id="CHEBI:15378"/>
        <dbReference type="ChEBI" id="CHEBI:57287"/>
        <dbReference type="ChEBI" id="CHEBI:57288"/>
        <dbReference type="ChEBI" id="CHEBI:57434"/>
        <dbReference type="ChEBI" id="CHEBI:137165"/>
        <dbReference type="EC" id="2.3.1.264"/>
    </reaction>
</comment>
<comment type="disruption phenotype">
    <text evidence="2">Cells lacking both ablA and ablB no longer produce N6-acetyl-beta-lysine and are incapable of growth at high salt concentrations.</text>
</comment>
<comment type="similarity">
    <text evidence="4">Belongs to the acetyltransferase family.</text>
</comment>
<accession>Q6LYX3</accession>
<reference key="1">
    <citation type="journal article" date="2004" name="J. Bacteriol.">
        <title>Complete genome sequence of the genetically tractable hydrogenotrophic methanogen Methanococcus maripaludis.</title>
        <authorList>
            <person name="Hendrickson E.L."/>
            <person name="Kaul R."/>
            <person name="Zhou Y."/>
            <person name="Bovee D."/>
            <person name="Chapman P."/>
            <person name="Chung J."/>
            <person name="Conway de Macario E."/>
            <person name="Dodsworth J.A."/>
            <person name="Gillett W."/>
            <person name="Graham D.E."/>
            <person name="Hackett M."/>
            <person name="Haydock A.K."/>
            <person name="Kang A."/>
            <person name="Land M.L."/>
            <person name="Levy R."/>
            <person name="Lie T.J."/>
            <person name="Major T.A."/>
            <person name="Moore B.C."/>
            <person name="Porat I."/>
            <person name="Palmeiri A."/>
            <person name="Rouse G."/>
            <person name="Saenphimmachak C."/>
            <person name="Soell D."/>
            <person name="Van Dien S."/>
            <person name="Wang T."/>
            <person name="Whitman W.B."/>
            <person name="Xia Q."/>
            <person name="Zhang Y."/>
            <person name="Larimer F.W."/>
            <person name="Olson M.V."/>
            <person name="Leigh J.A."/>
        </authorList>
    </citation>
    <scope>NUCLEOTIDE SEQUENCE [LARGE SCALE GENOMIC DNA]</scope>
    <source>
        <strain>DSM 14266 / JCM 13030 / NBRC 101832 / S2 / LL</strain>
    </source>
</reference>
<reference key="2">
    <citation type="journal article" date="2003" name="Appl. Environ. Microbiol.">
        <title>Lysine-2,3-aminomutase and beta-lysine acetyltransferase genes of methanogenic archaea are salt induced and are essential for the biosynthesis of Nepsilon-acetyl-beta-lysine and growth at high salinity.</title>
        <authorList>
            <person name="Pfluger K."/>
            <person name="Baumann S."/>
            <person name="Gottschalk G."/>
            <person name="Lin W."/>
            <person name="Santos H."/>
            <person name="Muller V."/>
        </authorList>
    </citation>
    <scope>IDENTIFICATION</scope>
    <scope>FUNCTION</scope>
    <scope>CATALYTIC ACTIVITY</scope>
    <scope>GENE NAME</scope>
    <scope>DISRUPTION PHENOTYPE</scope>
    <source>
        <strain>DSM 14266 / JCM 13030 / NBRC 101832 / S2 / LL</strain>
    </source>
</reference>
<feature type="chain" id="PRO_0000423060" description="Beta-lysine N(6)-acetyltransferase">
    <location>
        <begin position="1"/>
        <end position="274"/>
    </location>
</feature>
<feature type="domain" description="N-acetyltransferase" evidence="1">
    <location>
        <begin position="123"/>
        <end position="274"/>
    </location>
</feature>
<keyword id="KW-0012">Acyltransferase</keyword>
<keyword id="KW-1185">Reference proteome</keyword>
<keyword id="KW-0808">Transferase</keyword>
<evidence type="ECO:0000255" key="1">
    <source>
        <dbReference type="PROSITE-ProRule" id="PRU00532"/>
    </source>
</evidence>
<evidence type="ECO:0000269" key="2">
    <source>
    </source>
</evidence>
<evidence type="ECO:0000303" key="3">
    <source>
    </source>
</evidence>
<evidence type="ECO:0000305" key="4"/>
<proteinExistence type="evidence at protein level"/>
<dbReference type="EC" id="2.3.1.264" evidence="2"/>
<dbReference type="EMBL" id="BX950229">
    <property type="protein sequence ID" value="CAF30418.1"/>
    <property type="molecule type" value="Genomic_DNA"/>
</dbReference>
<dbReference type="RefSeq" id="WP_011170806.1">
    <property type="nucleotide sequence ID" value="NC_005791.1"/>
</dbReference>
<dbReference type="STRING" id="267377.MMP0862"/>
<dbReference type="EnsemblBacteria" id="CAF30418">
    <property type="protein sequence ID" value="CAF30418"/>
    <property type="gene ID" value="MMP0862"/>
</dbReference>
<dbReference type="GeneID" id="2762074"/>
<dbReference type="KEGG" id="mmp:MMP0862"/>
<dbReference type="PATRIC" id="fig|267377.15.peg.887"/>
<dbReference type="eggNOG" id="arCOG04916">
    <property type="taxonomic scope" value="Archaea"/>
</dbReference>
<dbReference type="HOGENOM" id="CLU_081246_0_0_2"/>
<dbReference type="OrthoDB" id="116527at2157"/>
<dbReference type="BioCyc" id="MetaCyc:MONOMER-20162"/>
<dbReference type="BRENDA" id="2.3.1.264">
    <property type="organism ID" value="3262"/>
</dbReference>
<dbReference type="Proteomes" id="UP000000590">
    <property type="component" value="Chromosome"/>
</dbReference>
<dbReference type="GO" id="GO:0008080">
    <property type="term" value="F:N-acetyltransferase activity"/>
    <property type="evidence" value="ECO:0007669"/>
    <property type="project" value="InterPro"/>
</dbReference>
<dbReference type="CDD" id="cd04301">
    <property type="entry name" value="NAT_SF"/>
    <property type="match status" value="1"/>
</dbReference>
<dbReference type="Gene3D" id="3.40.630.30">
    <property type="match status" value="2"/>
</dbReference>
<dbReference type="InterPro" id="IPR016181">
    <property type="entry name" value="Acyl_CoA_acyltransferase"/>
</dbReference>
<dbReference type="InterPro" id="IPR022525">
    <property type="entry name" value="GNAT_AblB"/>
</dbReference>
<dbReference type="InterPro" id="IPR000182">
    <property type="entry name" value="GNAT_dom"/>
</dbReference>
<dbReference type="NCBIfam" id="TIGR03827">
    <property type="entry name" value="GNAT_ablB"/>
    <property type="match status" value="1"/>
</dbReference>
<dbReference type="Pfam" id="PF00583">
    <property type="entry name" value="Acetyltransf_1"/>
    <property type="match status" value="1"/>
</dbReference>
<dbReference type="SUPFAM" id="SSF55729">
    <property type="entry name" value="Acyl-CoA N-acyltransferases (Nat)"/>
    <property type="match status" value="1"/>
</dbReference>
<dbReference type="PROSITE" id="PS51186">
    <property type="entry name" value="GNAT"/>
    <property type="match status" value="1"/>
</dbReference>
<protein>
    <recommendedName>
        <fullName evidence="4">Beta-lysine N(6)-acetyltransferase</fullName>
        <ecNumber evidence="2">2.3.1.264</ecNumber>
    </recommendedName>
</protein>
<sequence length="274" mass="31930">MEKIIEINDSIIQISDLNDRIYIMKLGKDVGELIKHVDSVCNEKKLSKVFAKVSGNKKELFEKNGYICEGKLENYYSNDDAYFMSKFFEESRKISKFSKEAEDVLNYVKTVGVNPHTKIDEKFHLKIANETDAEKLSKHYSKVFKTYPFPIDDPNYILKTMQTNVKYFIIEDNGKIVAASSCEMDIKNKCVEMTDFAVLEEYQKLGLSKYLLYIMEKIMKDNGYRVFYTIARSISYGMNITFKKMGYMYSGTAVNNTNICGNFEDMNFWYKLSE</sequence>
<gene>
    <name evidence="3" type="primary">ablB</name>
    <name type="synonym">yodP</name>
    <name type="ordered locus">MMP0862</name>
</gene>
<organism>
    <name type="scientific">Methanococcus maripaludis (strain DSM 14266 / JCM 13030 / NBRC 101832 / S2 / LL)</name>
    <dbReference type="NCBI Taxonomy" id="267377"/>
    <lineage>
        <taxon>Archaea</taxon>
        <taxon>Methanobacteriati</taxon>
        <taxon>Methanobacteriota</taxon>
        <taxon>Methanomada group</taxon>
        <taxon>Methanococci</taxon>
        <taxon>Methanococcales</taxon>
        <taxon>Methanococcaceae</taxon>
        <taxon>Methanococcus</taxon>
    </lineage>
</organism>
<name>ABLB_METMP</name>